<organism>
    <name type="scientific">Brucella anthropi (strain ATCC 49188 / DSM 6882 / CCUG 24695 / JCM 21032 / LMG 3331 / NBRC 15819 / NCTC 12168 / Alc 37)</name>
    <name type="common">Ochrobactrum anthropi</name>
    <dbReference type="NCBI Taxonomy" id="439375"/>
    <lineage>
        <taxon>Bacteria</taxon>
        <taxon>Pseudomonadati</taxon>
        <taxon>Pseudomonadota</taxon>
        <taxon>Alphaproteobacteria</taxon>
        <taxon>Hyphomicrobiales</taxon>
        <taxon>Brucellaceae</taxon>
        <taxon>Brucella/Ochrobactrum group</taxon>
        <taxon>Brucella</taxon>
    </lineage>
</organism>
<name>MGSA_BRUA4</name>
<evidence type="ECO:0000255" key="1">
    <source>
        <dbReference type="HAMAP-Rule" id="MF_00549"/>
    </source>
</evidence>
<protein>
    <recommendedName>
        <fullName evidence="1">Methylglyoxal synthase</fullName>
        <shortName evidence="1">MGS</shortName>
        <ecNumber evidence="1">4.2.3.3</ecNumber>
    </recommendedName>
</protein>
<gene>
    <name evidence="1" type="primary">mgsA</name>
    <name type="ordered locus">Oant_1333</name>
</gene>
<comment type="function">
    <text evidence="1">Catalyzes the formation of methylglyoxal from dihydroxyacetone phosphate.</text>
</comment>
<comment type="catalytic activity">
    <reaction evidence="1">
        <text>dihydroxyacetone phosphate = methylglyoxal + phosphate</text>
        <dbReference type="Rhea" id="RHEA:17937"/>
        <dbReference type="ChEBI" id="CHEBI:17158"/>
        <dbReference type="ChEBI" id="CHEBI:43474"/>
        <dbReference type="ChEBI" id="CHEBI:57642"/>
        <dbReference type="EC" id="4.2.3.3"/>
    </reaction>
</comment>
<comment type="similarity">
    <text evidence="1">Belongs to the methylglyoxal synthase family.</text>
</comment>
<accession>A6WYJ6</accession>
<proteinExistence type="inferred from homology"/>
<dbReference type="EC" id="4.2.3.3" evidence="1"/>
<dbReference type="EMBL" id="CP000758">
    <property type="protein sequence ID" value="ABS14050.1"/>
    <property type="molecule type" value="Genomic_DNA"/>
</dbReference>
<dbReference type="RefSeq" id="WP_010659399.1">
    <property type="nucleotide sequence ID" value="NC_009667.1"/>
</dbReference>
<dbReference type="SMR" id="A6WYJ6"/>
<dbReference type="STRING" id="439375.Oant_1333"/>
<dbReference type="KEGG" id="oan:Oant_1333"/>
<dbReference type="eggNOG" id="COG1803">
    <property type="taxonomic scope" value="Bacteria"/>
</dbReference>
<dbReference type="HOGENOM" id="CLU_120420_1_0_5"/>
<dbReference type="PhylomeDB" id="A6WYJ6"/>
<dbReference type="Proteomes" id="UP000002301">
    <property type="component" value="Chromosome 1"/>
</dbReference>
<dbReference type="GO" id="GO:0005829">
    <property type="term" value="C:cytosol"/>
    <property type="evidence" value="ECO:0007669"/>
    <property type="project" value="TreeGrafter"/>
</dbReference>
<dbReference type="GO" id="GO:0008929">
    <property type="term" value="F:methylglyoxal synthase activity"/>
    <property type="evidence" value="ECO:0007669"/>
    <property type="project" value="UniProtKB-UniRule"/>
</dbReference>
<dbReference type="GO" id="GO:0019242">
    <property type="term" value="P:methylglyoxal biosynthetic process"/>
    <property type="evidence" value="ECO:0007669"/>
    <property type="project" value="UniProtKB-UniRule"/>
</dbReference>
<dbReference type="CDD" id="cd01422">
    <property type="entry name" value="MGS"/>
    <property type="match status" value="1"/>
</dbReference>
<dbReference type="Gene3D" id="3.40.50.1380">
    <property type="entry name" value="Methylglyoxal synthase-like domain"/>
    <property type="match status" value="1"/>
</dbReference>
<dbReference type="HAMAP" id="MF_00549">
    <property type="entry name" value="Methylglyoxal_synth"/>
    <property type="match status" value="1"/>
</dbReference>
<dbReference type="InterPro" id="IPR004363">
    <property type="entry name" value="Methylgl_synth"/>
</dbReference>
<dbReference type="InterPro" id="IPR018148">
    <property type="entry name" value="Methylglyoxal_synth_AS"/>
</dbReference>
<dbReference type="InterPro" id="IPR011607">
    <property type="entry name" value="MGS-like_dom"/>
</dbReference>
<dbReference type="InterPro" id="IPR036914">
    <property type="entry name" value="MGS-like_dom_sf"/>
</dbReference>
<dbReference type="NCBIfam" id="TIGR00160">
    <property type="entry name" value="MGSA"/>
    <property type="match status" value="1"/>
</dbReference>
<dbReference type="NCBIfam" id="NF003559">
    <property type="entry name" value="PRK05234.1"/>
    <property type="match status" value="1"/>
</dbReference>
<dbReference type="PANTHER" id="PTHR30492">
    <property type="entry name" value="METHYLGLYOXAL SYNTHASE"/>
    <property type="match status" value="1"/>
</dbReference>
<dbReference type="PANTHER" id="PTHR30492:SF0">
    <property type="entry name" value="METHYLGLYOXAL SYNTHASE"/>
    <property type="match status" value="1"/>
</dbReference>
<dbReference type="Pfam" id="PF02142">
    <property type="entry name" value="MGS"/>
    <property type="match status" value="1"/>
</dbReference>
<dbReference type="PIRSF" id="PIRSF006614">
    <property type="entry name" value="Methylglyox_syn"/>
    <property type="match status" value="1"/>
</dbReference>
<dbReference type="SMART" id="SM00851">
    <property type="entry name" value="MGS"/>
    <property type="match status" value="1"/>
</dbReference>
<dbReference type="SUPFAM" id="SSF52335">
    <property type="entry name" value="Methylglyoxal synthase-like"/>
    <property type="match status" value="1"/>
</dbReference>
<dbReference type="PROSITE" id="PS01335">
    <property type="entry name" value="METHYLGLYOXAL_SYNTH"/>
    <property type="match status" value="1"/>
</dbReference>
<dbReference type="PROSITE" id="PS51855">
    <property type="entry name" value="MGS"/>
    <property type="match status" value="1"/>
</dbReference>
<sequence>MTERLRIALIAHDQKKDDMVAFAKAHEQALARFDIVATGTTGSLILDACPSLSIQRVKSGPLGGDQQIGAMIAEGTVEVLIFFIDPLSPLPHDVDVKALTRLGSVYDIPMALNRATAEKLIKALD</sequence>
<keyword id="KW-0456">Lyase</keyword>
<keyword id="KW-1185">Reference proteome</keyword>
<reference key="1">
    <citation type="journal article" date="2011" name="J. Bacteriol.">
        <title>Genome of Ochrobactrum anthropi ATCC 49188 T, a versatile opportunistic pathogen and symbiont of several eukaryotic hosts.</title>
        <authorList>
            <person name="Chain P.S."/>
            <person name="Lang D.M."/>
            <person name="Comerci D.J."/>
            <person name="Malfatti S.A."/>
            <person name="Vergez L.M."/>
            <person name="Shin M."/>
            <person name="Ugalde R.A."/>
            <person name="Garcia E."/>
            <person name="Tolmasky M.E."/>
        </authorList>
    </citation>
    <scope>NUCLEOTIDE SEQUENCE [LARGE SCALE GENOMIC DNA]</scope>
    <source>
        <strain>ATCC 49188 / DSM 6882 / CCUG 24695 / JCM 21032 / LMG 3331 / NBRC 15819 / NCTC 12168 / Alc 37</strain>
    </source>
</reference>
<feature type="chain" id="PRO_1000017820" description="Methylglyoxal synthase">
    <location>
        <begin position="1"/>
        <end position="125"/>
    </location>
</feature>
<feature type="domain" description="MGS-like" evidence="1">
    <location>
        <begin position="1"/>
        <end position="125"/>
    </location>
</feature>
<feature type="active site" description="Proton donor/acceptor" evidence="1">
    <location>
        <position position="65"/>
    </location>
</feature>
<feature type="binding site" evidence="1">
    <location>
        <position position="12"/>
    </location>
    <ligand>
        <name>substrate</name>
    </ligand>
</feature>
<feature type="binding site" evidence="1">
    <location>
        <position position="16"/>
    </location>
    <ligand>
        <name>substrate</name>
    </ligand>
</feature>
<feature type="binding site" evidence="1">
    <location>
        <begin position="38"/>
        <end position="41"/>
    </location>
    <ligand>
        <name>substrate</name>
    </ligand>
</feature>
<feature type="binding site" evidence="1">
    <location>
        <begin position="59"/>
        <end position="60"/>
    </location>
    <ligand>
        <name>substrate</name>
    </ligand>
</feature>
<feature type="binding site" evidence="1">
    <location>
        <position position="92"/>
    </location>
    <ligand>
        <name>substrate</name>
    </ligand>
</feature>